<sequence length="86" mass="9656">MNSLLMITACLVVIGTVWAKEGYLVDVKGCKKNCWKLGDNDYCNRECKWKHIGGSYGYCYGFGCYCEGLPDSTQTWPLPNKTCGKK</sequence>
<accession>Q95WD3</accession>
<proteinExistence type="evidence at transcript level"/>
<dbReference type="EMBL" id="AF338448">
    <property type="protein sequence ID" value="AAL23416.1"/>
    <property type="molecule type" value="mRNA"/>
</dbReference>
<dbReference type="SMR" id="Q95WD3"/>
<dbReference type="GO" id="GO:0005576">
    <property type="term" value="C:extracellular region"/>
    <property type="evidence" value="ECO:0007669"/>
    <property type="project" value="UniProtKB-SubCell"/>
</dbReference>
<dbReference type="GO" id="GO:0019871">
    <property type="term" value="F:sodium channel inhibitor activity"/>
    <property type="evidence" value="ECO:0007669"/>
    <property type="project" value="InterPro"/>
</dbReference>
<dbReference type="GO" id="GO:0090729">
    <property type="term" value="F:toxin activity"/>
    <property type="evidence" value="ECO:0007669"/>
    <property type="project" value="UniProtKB-KW"/>
</dbReference>
<dbReference type="GO" id="GO:0006952">
    <property type="term" value="P:defense response"/>
    <property type="evidence" value="ECO:0007669"/>
    <property type="project" value="InterPro"/>
</dbReference>
<dbReference type="CDD" id="cd23106">
    <property type="entry name" value="neurotoxins_LC_scorpion"/>
    <property type="match status" value="1"/>
</dbReference>
<dbReference type="FunFam" id="3.30.30.10:FF:000002">
    <property type="entry name" value="Alpha-like toxin BmK-M1"/>
    <property type="match status" value="1"/>
</dbReference>
<dbReference type="Gene3D" id="3.30.30.10">
    <property type="entry name" value="Knottin, scorpion toxin-like"/>
    <property type="match status" value="1"/>
</dbReference>
<dbReference type="InterPro" id="IPR044062">
    <property type="entry name" value="LCN-type_CS_alpha_beta_dom"/>
</dbReference>
<dbReference type="InterPro" id="IPR003614">
    <property type="entry name" value="Scorpion_toxin-like"/>
</dbReference>
<dbReference type="InterPro" id="IPR036574">
    <property type="entry name" value="Scorpion_toxin-like_sf"/>
</dbReference>
<dbReference type="InterPro" id="IPR018218">
    <property type="entry name" value="Scorpion_toxinL"/>
</dbReference>
<dbReference type="InterPro" id="IPR002061">
    <property type="entry name" value="Scorpion_toxinL/defensin"/>
</dbReference>
<dbReference type="Pfam" id="PF00537">
    <property type="entry name" value="Toxin_3"/>
    <property type="match status" value="1"/>
</dbReference>
<dbReference type="PRINTS" id="PR00285">
    <property type="entry name" value="SCORPNTOXIN"/>
</dbReference>
<dbReference type="SMART" id="SM00505">
    <property type="entry name" value="Knot1"/>
    <property type="match status" value="1"/>
</dbReference>
<dbReference type="SUPFAM" id="SSF57095">
    <property type="entry name" value="Scorpion toxin-like"/>
    <property type="match status" value="1"/>
</dbReference>
<dbReference type="PROSITE" id="PS51863">
    <property type="entry name" value="LCN_CSAB"/>
    <property type="match status" value="1"/>
</dbReference>
<protein>
    <recommendedName>
        <fullName>Neurotoxin E1x</fullName>
    </recommendedName>
    <alternativeName>
        <fullName>CsE1x</fullName>
    </alternativeName>
</protein>
<comment type="function">
    <text evidence="1">Binds to sodium channels (Nav) and inhibits the inactivation of the activated channels, thereby blocking neuronal transmission.</text>
</comment>
<comment type="subcellular location">
    <subcellularLocation>
        <location>Secreted</location>
    </subcellularLocation>
</comment>
<comment type="tissue specificity">
    <text>Expressed by the venom gland.</text>
</comment>
<comment type="domain">
    <text evidence="4">Has the structural arrangement of an alpha-helix connected to antiparallel beta-sheets by disulfide bonds (CS-alpha/beta).</text>
</comment>
<comment type="similarity">
    <text evidence="4">Belongs to the long (4 C-C) scorpion toxin superfamily. Sodium channel inhibitor family. Beta subfamily.</text>
</comment>
<keyword id="KW-0027">Amidation</keyword>
<keyword id="KW-1015">Disulfide bond</keyword>
<keyword id="KW-0872">Ion channel impairing toxin</keyword>
<keyword id="KW-0528">Neurotoxin</keyword>
<keyword id="KW-0964">Secreted</keyword>
<keyword id="KW-0732">Signal</keyword>
<keyword id="KW-0800">Toxin</keyword>
<keyword id="KW-0738">Voltage-gated sodium channel impairing toxin</keyword>
<feature type="signal peptide">
    <location>
        <begin position="1"/>
        <end position="19"/>
    </location>
</feature>
<feature type="peptide" id="PRO_0000035295" description="Neurotoxin E1x">
    <location>
        <begin position="20"/>
        <end position="83"/>
    </location>
</feature>
<feature type="domain" description="LCN-type CS-alpha/beta" evidence="3">
    <location>
        <begin position="20"/>
        <end position="84"/>
    </location>
</feature>
<feature type="modified residue" description="Cysteine amide" evidence="2">
    <location>
        <position position="83"/>
    </location>
</feature>
<feature type="disulfide bond" evidence="3">
    <location>
        <begin position="30"/>
        <end position="83"/>
    </location>
</feature>
<feature type="disulfide bond" evidence="3">
    <location>
        <begin position="34"/>
        <end position="59"/>
    </location>
</feature>
<feature type="disulfide bond" evidence="3">
    <location>
        <begin position="43"/>
        <end position="64"/>
    </location>
</feature>
<feature type="disulfide bond" evidence="3">
    <location>
        <begin position="47"/>
        <end position="66"/>
    </location>
</feature>
<organism>
    <name type="scientific">Centruroides sculpturatus</name>
    <name type="common">Arizona bark scorpion</name>
    <dbReference type="NCBI Taxonomy" id="218467"/>
    <lineage>
        <taxon>Eukaryota</taxon>
        <taxon>Metazoa</taxon>
        <taxon>Ecdysozoa</taxon>
        <taxon>Arthropoda</taxon>
        <taxon>Chelicerata</taxon>
        <taxon>Arachnida</taxon>
        <taxon>Scorpiones</taxon>
        <taxon>Buthida</taxon>
        <taxon>Buthoidea</taxon>
        <taxon>Buthidae</taxon>
        <taxon>Centruroides</taxon>
    </lineage>
</organism>
<reference key="1">
    <citation type="journal article" date="2001" name="Toxicon">
        <title>Genes and peptides from the scorpion Centruroides sculpturatus Ewing, that recognize Na(+)-channels.</title>
        <authorList>
            <person name="Corona M."/>
            <person name="Valdez-Cruz N.A."/>
            <person name="Merino E."/>
            <person name="Zurita M."/>
            <person name="Possani L.D."/>
        </authorList>
    </citation>
    <scope>NUCLEOTIDE SEQUENCE [MRNA]</scope>
    <source>
        <tissue>Venom gland</tissue>
    </source>
</reference>
<evidence type="ECO:0000250" key="1"/>
<evidence type="ECO:0000255" key="2"/>
<evidence type="ECO:0000255" key="3">
    <source>
        <dbReference type="PROSITE-ProRule" id="PRU01210"/>
    </source>
</evidence>
<evidence type="ECO:0000305" key="4"/>
<name>SCXX_CENSC</name>